<reference key="1">
    <citation type="journal article" date="2007" name="BMC Microbiol.">
        <title>Subtle genetic changes enhance virulence of methicillin resistant and sensitive Staphylococcus aureus.</title>
        <authorList>
            <person name="Highlander S.K."/>
            <person name="Hulten K.G."/>
            <person name="Qin X."/>
            <person name="Jiang H."/>
            <person name="Yerrapragada S."/>
            <person name="Mason E.O. Jr."/>
            <person name="Shang Y."/>
            <person name="Williams T.M."/>
            <person name="Fortunov R.M."/>
            <person name="Liu Y."/>
            <person name="Igboeli O."/>
            <person name="Petrosino J."/>
            <person name="Tirumalai M."/>
            <person name="Uzman A."/>
            <person name="Fox G.E."/>
            <person name="Cardenas A.M."/>
            <person name="Muzny D.M."/>
            <person name="Hemphill L."/>
            <person name="Ding Y."/>
            <person name="Dugan S."/>
            <person name="Blyth P.R."/>
            <person name="Buhay C.J."/>
            <person name="Dinh H.H."/>
            <person name="Hawes A.C."/>
            <person name="Holder M."/>
            <person name="Kovar C.L."/>
            <person name="Lee S.L."/>
            <person name="Liu W."/>
            <person name="Nazareth L.V."/>
            <person name="Wang Q."/>
            <person name="Zhou J."/>
            <person name="Kaplan S.L."/>
            <person name="Weinstock G.M."/>
        </authorList>
    </citation>
    <scope>NUCLEOTIDE SEQUENCE [LARGE SCALE GENOMIC DNA]</scope>
    <source>
        <strain>USA300 / TCH1516</strain>
    </source>
</reference>
<dbReference type="EC" id="3.4.25.2" evidence="1"/>
<dbReference type="EMBL" id="CP000730">
    <property type="protein sequence ID" value="ABX29199.1"/>
    <property type="molecule type" value="Genomic_DNA"/>
</dbReference>
<dbReference type="RefSeq" id="WP_000072681.1">
    <property type="nucleotide sequence ID" value="NC_010079.1"/>
</dbReference>
<dbReference type="SMR" id="A8Z3T3"/>
<dbReference type="MEROPS" id="T01.007"/>
<dbReference type="KEGG" id="sax:USA300HOU_1184"/>
<dbReference type="HOGENOM" id="CLU_093872_1_1_9"/>
<dbReference type="GO" id="GO:0009376">
    <property type="term" value="C:HslUV protease complex"/>
    <property type="evidence" value="ECO:0007669"/>
    <property type="project" value="UniProtKB-UniRule"/>
</dbReference>
<dbReference type="GO" id="GO:0005839">
    <property type="term" value="C:proteasome core complex"/>
    <property type="evidence" value="ECO:0007669"/>
    <property type="project" value="InterPro"/>
</dbReference>
<dbReference type="GO" id="GO:0046872">
    <property type="term" value="F:metal ion binding"/>
    <property type="evidence" value="ECO:0007669"/>
    <property type="project" value="UniProtKB-KW"/>
</dbReference>
<dbReference type="GO" id="GO:0004298">
    <property type="term" value="F:threonine-type endopeptidase activity"/>
    <property type="evidence" value="ECO:0007669"/>
    <property type="project" value="UniProtKB-KW"/>
</dbReference>
<dbReference type="GO" id="GO:0051603">
    <property type="term" value="P:proteolysis involved in protein catabolic process"/>
    <property type="evidence" value="ECO:0007669"/>
    <property type="project" value="InterPro"/>
</dbReference>
<dbReference type="CDD" id="cd01913">
    <property type="entry name" value="protease_HslV"/>
    <property type="match status" value="1"/>
</dbReference>
<dbReference type="Gene3D" id="3.60.20.10">
    <property type="entry name" value="Glutamine Phosphoribosylpyrophosphate, subunit 1, domain 1"/>
    <property type="match status" value="1"/>
</dbReference>
<dbReference type="HAMAP" id="MF_00248">
    <property type="entry name" value="HslV"/>
    <property type="match status" value="1"/>
</dbReference>
<dbReference type="InterPro" id="IPR022281">
    <property type="entry name" value="ATP-dep_Prtase_HsIV_su"/>
</dbReference>
<dbReference type="InterPro" id="IPR029055">
    <property type="entry name" value="Ntn_hydrolases_N"/>
</dbReference>
<dbReference type="InterPro" id="IPR001353">
    <property type="entry name" value="Proteasome_sua/b"/>
</dbReference>
<dbReference type="InterPro" id="IPR023333">
    <property type="entry name" value="Proteasome_suB-type"/>
</dbReference>
<dbReference type="NCBIfam" id="TIGR03692">
    <property type="entry name" value="ATP_dep_HslV"/>
    <property type="match status" value="1"/>
</dbReference>
<dbReference type="NCBIfam" id="NF003964">
    <property type="entry name" value="PRK05456.1"/>
    <property type="match status" value="1"/>
</dbReference>
<dbReference type="PANTHER" id="PTHR32194:SF0">
    <property type="entry name" value="ATP-DEPENDENT PROTEASE SUBUNIT HSLV"/>
    <property type="match status" value="1"/>
</dbReference>
<dbReference type="PANTHER" id="PTHR32194">
    <property type="entry name" value="METALLOPROTEASE TLDD"/>
    <property type="match status" value="1"/>
</dbReference>
<dbReference type="Pfam" id="PF00227">
    <property type="entry name" value="Proteasome"/>
    <property type="match status" value="1"/>
</dbReference>
<dbReference type="PIRSF" id="PIRSF039093">
    <property type="entry name" value="HslV"/>
    <property type="match status" value="1"/>
</dbReference>
<dbReference type="SUPFAM" id="SSF56235">
    <property type="entry name" value="N-terminal nucleophile aminohydrolases (Ntn hydrolases)"/>
    <property type="match status" value="1"/>
</dbReference>
<dbReference type="PROSITE" id="PS51476">
    <property type="entry name" value="PROTEASOME_BETA_2"/>
    <property type="match status" value="1"/>
</dbReference>
<evidence type="ECO:0000255" key="1">
    <source>
        <dbReference type="HAMAP-Rule" id="MF_00248"/>
    </source>
</evidence>
<keyword id="KW-0021">Allosteric enzyme</keyword>
<keyword id="KW-0963">Cytoplasm</keyword>
<keyword id="KW-0378">Hydrolase</keyword>
<keyword id="KW-0479">Metal-binding</keyword>
<keyword id="KW-0645">Protease</keyword>
<keyword id="KW-0915">Sodium</keyword>
<keyword id="KW-0888">Threonine protease</keyword>
<accession>A8Z3T3</accession>
<comment type="function">
    <text evidence="1">Protease subunit of a proteasome-like degradation complex believed to be a general protein degrading machinery.</text>
</comment>
<comment type="catalytic activity">
    <reaction evidence="1">
        <text>ATP-dependent cleavage of peptide bonds with broad specificity.</text>
        <dbReference type="EC" id="3.4.25.2"/>
    </reaction>
</comment>
<comment type="activity regulation">
    <text evidence="1">Allosterically activated by HslU binding.</text>
</comment>
<comment type="subunit">
    <text evidence="1">A double ring-shaped homohexamer of HslV is capped on each side by a ring-shaped HslU homohexamer. The assembly of the HslU/HslV complex is dependent on binding of ATP.</text>
</comment>
<comment type="subcellular location">
    <subcellularLocation>
        <location evidence="1">Cytoplasm</location>
    </subcellularLocation>
</comment>
<comment type="similarity">
    <text evidence="1">Belongs to the peptidase T1B family. HslV subfamily.</text>
</comment>
<gene>
    <name evidence="1" type="primary">hslV</name>
    <name type="ordered locus">USA300HOU_1184</name>
</gene>
<proteinExistence type="inferred from homology"/>
<name>HSLV_STAAT</name>
<sequence length="181" mass="19572">MSNTTLHATTIYAVRHNGKAAMAGDGQVTLGQQVIMKQTARKVRRLYEGKVLAGFAGSVADAFTLFEKFETKLQQFSGNLERAAVELAQEWRGDKQLRQLEAMLIVMDKDAILVVSGTGEVIAPDDDLIAIGSGGNYALSAGRALKRHASHLSAEEMAYESLKVAADICVFTNDNIVVETL</sequence>
<organism>
    <name type="scientific">Staphylococcus aureus (strain USA300 / TCH1516)</name>
    <dbReference type="NCBI Taxonomy" id="451516"/>
    <lineage>
        <taxon>Bacteria</taxon>
        <taxon>Bacillati</taxon>
        <taxon>Bacillota</taxon>
        <taxon>Bacilli</taxon>
        <taxon>Bacillales</taxon>
        <taxon>Staphylococcaceae</taxon>
        <taxon>Staphylococcus</taxon>
    </lineage>
</organism>
<feature type="chain" id="PRO_1000078434" description="ATP-dependent protease subunit HslV">
    <location>
        <begin position="1"/>
        <end position="181"/>
    </location>
</feature>
<feature type="active site" evidence="1">
    <location>
        <position position="9"/>
    </location>
</feature>
<feature type="binding site" evidence="1">
    <location>
        <position position="166"/>
    </location>
    <ligand>
        <name>Na(+)</name>
        <dbReference type="ChEBI" id="CHEBI:29101"/>
    </ligand>
</feature>
<feature type="binding site" evidence="1">
    <location>
        <position position="169"/>
    </location>
    <ligand>
        <name>Na(+)</name>
        <dbReference type="ChEBI" id="CHEBI:29101"/>
    </ligand>
</feature>
<feature type="binding site" evidence="1">
    <location>
        <position position="172"/>
    </location>
    <ligand>
        <name>Na(+)</name>
        <dbReference type="ChEBI" id="CHEBI:29101"/>
    </ligand>
</feature>
<protein>
    <recommendedName>
        <fullName evidence="1">ATP-dependent protease subunit HslV</fullName>
        <ecNumber evidence="1">3.4.25.2</ecNumber>
    </recommendedName>
</protein>